<feature type="chain" id="PRO_1000138800" description="Orotate phosphoribosyltransferase">
    <location>
        <begin position="1"/>
        <end position="185"/>
    </location>
</feature>
<feature type="binding site" evidence="1">
    <location>
        <position position="102"/>
    </location>
    <ligand>
        <name>5-phospho-alpha-D-ribose 1-diphosphate</name>
        <dbReference type="ChEBI" id="CHEBI:58017"/>
        <note>ligand shared between dimeric partners</note>
    </ligand>
</feature>
<feature type="binding site" description="in other chain" evidence="1">
    <location>
        <position position="103"/>
    </location>
    <ligand>
        <name>5-phospho-alpha-D-ribose 1-diphosphate</name>
        <dbReference type="ChEBI" id="CHEBI:58017"/>
        <note>ligand shared between dimeric partners</note>
    </ligand>
</feature>
<feature type="binding site" evidence="1">
    <location>
        <position position="106"/>
    </location>
    <ligand>
        <name>5-phospho-alpha-D-ribose 1-diphosphate</name>
        <dbReference type="ChEBI" id="CHEBI:58017"/>
        <note>ligand shared between dimeric partners</note>
    </ligand>
</feature>
<feature type="binding site" evidence="1">
    <location>
        <position position="108"/>
    </location>
    <ligand>
        <name>5-phospho-alpha-D-ribose 1-diphosphate</name>
        <dbReference type="ChEBI" id="CHEBI:58017"/>
        <note>ligand shared between dimeric partners</note>
    </ligand>
</feature>
<feature type="binding site" description="in other chain" evidence="1">
    <location>
        <begin position="128"/>
        <end position="136"/>
    </location>
    <ligand>
        <name>5-phospho-alpha-D-ribose 1-diphosphate</name>
        <dbReference type="ChEBI" id="CHEBI:58017"/>
        <note>ligand shared between dimeric partners</note>
    </ligand>
</feature>
<feature type="binding site" evidence="1">
    <location>
        <position position="132"/>
    </location>
    <ligand>
        <name>orotate</name>
        <dbReference type="ChEBI" id="CHEBI:30839"/>
    </ligand>
</feature>
<feature type="binding site" evidence="1">
    <location>
        <position position="160"/>
    </location>
    <ligand>
        <name>orotate</name>
        <dbReference type="ChEBI" id="CHEBI:30839"/>
    </ligand>
</feature>
<reference key="1">
    <citation type="journal article" date="2008" name="PLoS ONE">
        <title>Genome sequence of the saprophyte Leptospira biflexa provides insights into the evolution of Leptospira and the pathogenesis of leptospirosis.</title>
        <authorList>
            <person name="Picardeau M."/>
            <person name="Bulach D.M."/>
            <person name="Bouchier C."/>
            <person name="Zuerner R.L."/>
            <person name="Zidane N."/>
            <person name="Wilson P.J."/>
            <person name="Creno S."/>
            <person name="Kuczek E.S."/>
            <person name="Bommezzadri S."/>
            <person name="Davis J.C."/>
            <person name="McGrath A."/>
            <person name="Johnson M.J."/>
            <person name="Boursaux-Eude C."/>
            <person name="Seemann T."/>
            <person name="Rouy Z."/>
            <person name="Coppel R.L."/>
            <person name="Rood J.I."/>
            <person name="Lajus A."/>
            <person name="Davies J.K."/>
            <person name="Medigue C."/>
            <person name="Adler B."/>
        </authorList>
    </citation>
    <scope>NUCLEOTIDE SEQUENCE [LARGE SCALE GENOMIC DNA]</scope>
    <source>
        <strain>Patoc 1 / Ames</strain>
    </source>
</reference>
<keyword id="KW-0328">Glycosyltransferase</keyword>
<keyword id="KW-0460">Magnesium</keyword>
<keyword id="KW-0665">Pyrimidine biosynthesis</keyword>
<keyword id="KW-0808">Transferase</keyword>
<proteinExistence type="inferred from homology"/>
<accession>B0SCV6</accession>
<name>PYRE_LEPBA</name>
<gene>
    <name evidence="1" type="primary">pyrE</name>
    <name type="ordered locus">LBF_2358</name>
</gene>
<organism>
    <name type="scientific">Leptospira biflexa serovar Patoc (strain Patoc 1 / Ames)</name>
    <dbReference type="NCBI Taxonomy" id="355278"/>
    <lineage>
        <taxon>Bacteria</taxon>
        <taxon>Pseudomonadati</taxon>
        <taxon>Spirochaetota</taxon>
        <taxon>Spirochaetia</taxon>
        <taxon>Leptospirales</taxon>
        <taxon>Leptospiraceae</taxon>
        <taxon>Leptospira</taxon>
    </lineage>
</organism>
<evidence type="ECO:0000255" key="1">
    <source>
        <dbReference type="HAMAP-Rule" id="MF_01208"/>
    </source>
</evidence>
<comment type="function">
    <text evidence="1">Catalyzes the transfer of a ribosyl phosphate group from 5-phosphoribose 1-diphosphate to orotate, leading to the formation of orotidine monophosphate (OMP).</text>
</comment>
<comment type="catalytic activity">
    <reaction evidence="1">
        <text>orotidine 5'-phosphate + diphosphate = orotate + 5-phospho-alpha-D-ribose 1-diphosphate</text>
        <dbReference type="Rhea" id="RHEA:10380"/>
        <dbReference type="ChEBI" id="CHEBI:30839"/>
        <dbReference type="ChEBI" id="CHEBI:33019"/>
        <dbReference type="ChEBI" id="CHEBI:57538"/>
        <dbReference type="ChEBI" id="CHEBI:58017"/>
        <dbReference type="EC" id="2.4.2.10"/>
    </reaction>
</comment>
<comment type="cofactor">
    <cofactor evidence="1">
        <name>Mg(2+)</name>
        <dbReference type="ChEBI" id="CHEBI:18420"/>
    </cofactor>
</comment>
<comment type="pathway">
    <text evidence="1">Pyrimidine metabolism; UMP biosynthesis via de novo pathway; UMP from orotate: step 1/2.</text>
</comment>
<comment type="subunit">
    <text evidence="1">Homodimer.</text>
</comment>
<comment type="similarity">
    <text evidence="1">Belongs to the purine/pyrimidine phosphoribosyltransferase family. PyrE subfamily.</text>
</comment>
<protein>
    <recommendedName>
        <fullName evidence="1">Orotate phosphoribosyltransferase</fullName>
        <shortName evidence="1">OPRT</shortName>
        <shortName evidence="1">OPRTase</shortName>
        <ecNumber evidence="1">2.4.2.10</ecNumber>
    </recommendedName>
</protein>
<sequence length="185" mass="20755">MSHSHRDALFQWMKTYVYRHSETPFRLASGLESQHYFNCKEITLHPERLSILAECFIEEIIPKLNIEFQAVGGLTLGADPIAYAISLGYQKRGKNVFPLVVRKESKGHGTGQQIEGFWKDIKTCLVVDDVITTGGSTLKAVKVLREVGINVTKGICILDREEGGSENLQTENVTMTSIFAKSEFF</sequence>
<dbReference type="EC" id="2.4.2.10" evidence="1"/>
<dbReference type="EMBL" id="CP000777">
    <property type="protein sequence ID" value="ABZ94848.1"/>
    <property type="molecule type" value="Genomic_DNA"/>
</dbReference>
<dbReference type="RefSeq" id="WP_012389378.1">
    <property type="nucleotide sequence ID" value="NC_010842.1"/>
</dbReference>
<dbReference type="SMR" id="B0SCV6"/>
<dbReference type="KEGG" id="lbf:LBF_2358"/>
<dbReference type="HOGENOM" id="CLU_074878_2_0_12"/>
<dbReference type="UniPathway" id="UPA00070">
    <property type="reaction ID" value="UER00119"/>
</dbReference>
<dbReference type="GO" id="GO:0000287">
    <property type="term" value="F:magnesium ion binding"/>
    <property type="evidence" value="ECO:0007669"/>
    <property type="project" value="UniProtKB-UniRule"/>
</dbReference>
<dbReference type="GO" id="GO:0004588">
    <property type="term" value="F:orotate phosphoribosyltransferase activity"/>
    <property type="evidence" value="ECO:0007669"/>
    <property type="project" value="UniProtKB-UniRule"/>
</dbReference>
<dbReference type="GO" id="GO:0044205">
    <property type="term" value="P:'de novo' UMP biosynthetic process"/>
    <property type="evidence" value="ECO:0007669"/>
    <property type="project" value="UniProtKB-UniRule"/>
</dbReference>
<dbReference type="GO" id="GO:0019856">
    <property type="term" value="P:pyrimidine nucleobase biosynthetic process"/>
    <property type="evidence" value="ECO:0007669"/>
    <property type="project" value="TreeGrafter"/>
</dbReference>
<dbReference type="CDD" id="cd06223">
    <property type="entry name" value="PRTases_typeI"/>
    <property type="match status" value="1"/>
</dbReference>
<dbReference type="Gene3D" id="3.40.50.2020">
    <property type="match status" value="1"/>
</dbReference>
<dbReference type="HAMAP" id="MF_01208">
    <property type="entry name" value="PyrE"/>
    <property type="match status" value="1"/>
</dbReference>
<dbReference type="InterPro" id="IPR023031">
    <property type="entry name" value="OPRT"/>
</dbReference>
<dbReference type="InterPro" id="IPR004467">
    <property type="entry name" value="Or_phspho_trans_dom"/>
</dbReference>
<dbReference type="InterPro" id="IPR000836">
    <property type="entry name" value="PRibTrfase_dom"/>
</dbReference>
<dbReference type="InterPro" id="IPR029057">
    <property type="entry name" value="PRTase-like"/>
</dbReference>
<dbReference type="NCBIfam" id="TIGR00336">
    <property type="entry name" value="pyrE"/>
    <property type="match status" value="1"/>
</dbReference>
<dbReference type="PANTHER" id="PTHR19278">
    <property type="entry name" value="OROTATE PHOSPHORIBOSYLTRANSFERASE"/>
    <property type="match status" value="1"/>
</dbReference>
<dbReference type="PANTHER" id="PTHR19278:SF9">
    <property type="entry name" value="URIDINE 5'-MONOPHOSPHATE SYNTHASE"/>
    <property type="match status" value="1"/>
</dbReference>
<dbReference type="Pfam" id="PF00156">
    <property type="entry name" value="Pribosyltran"/>
    <property type="match status" value="1"/>
</dbReference>
<dbReference type="SUPFAM" id="SSF53271">
    <property type="entry name" value="PRTase-like"/>
    <property type="match status" value="1"/>
</dbReference>
<dbReference type="PROSITE" id="PS00103">
    <property type="entry name" value="PUR_PYR_PR_TRANSFER"/>
    <property type="match status" value="1"/>
</dbReference>